<name>Y060_NPVLD</name>
<proteinExistence type="predicted"/>
<accession>Q90178</accession>
<organism>
    <name type="scientific">Lymantria dispar multicapsid nuclear polyhedrosis virus</name>
    <name type="common">LdMNPV</name>
    <dbReference type="NCBI Taxonomy" id="10449"/>
    <lineage>
        <taxon>Viruses</taxon>
        <taxon>Viruses incertae sedis</taxon>
        <taxon>Naldaviricetes</taxon>
        <taxon>Lefavirales</taxon>
        <taxon>Baculoviridae</taxon>
        <taxon>Alphabaculovirus</taxon>
        <taxon>Alphabaculovirus lydisparis</taxon>
    </lineage>
</organism>
<organismHost>
    <name type="scientific">Lepidoptera</name>
    <name type="common">butterflies and moths</name>
    <dbReference type="NCBI Taxonomy" id="7088"/>
</organismHost>
<reference key="1">
    <citation type="journal article" date="1996" name="J. Gen. Virol.">
        <title>Characterization of the Lymantria dispar nucleopolyhedrovirus 25K FP gene.</title>
        <authorList>
            <person name="Bischoff D.S."/>
            <person name="Slavicek J.M."/>
        </authorList>
    </citation>
    <scope>NUCLEOTIDE SEQUENCE [GENOMIC DNA]</scope>
</reference>
<reference key="2">
    <citation type="journal article" date="1999" name="Virology">
        <title>Sequence and analysis of the genome of a baculovirus pathogenic for Lymantria dispar.</title>
        <authorList>
            <person name="Kuzio J."/>
            <person name="Pearson M.N."/>
            <person name="Harwood S.H."/>
            <person name="Funk C.J."/>
            <person name="Evans J.T."/>
            <person name="Slavicek J.M."/>
            <person name="Rohrmann G.F."/>
        </authorList>
    </citation>
    <scope>NUCLEOTIDE SEQUENCE [LARGE SCALE GENOMIC DNA]</scope>
    <source>
        <strain>Isolate Cl 5-6</strain>
    </source>
</reference>
<evidence type="ECO:0000256" key="1">
    <source>
        <dbReference type="SAM" id="MobiDB-lite"/>
    </source>
</evidence>
<sequence>MLFTSVLDLPTSTRALPYNGKRIYLKFYNKSIKMRNSPTTADAIAWTAVKRKYYCDRGEWLPFADANDYDTTTTEEEDSSTTTTTDNETNSDDDI</sequence>
<keyword id="KW-1185">Reference proteome</keyword>
<dbReference type="EMBL" id="U58676">
    <property type="protein sequence ID" value="AAC18645.1"/>
    <property type="molecule type" value="Genomic_DNA"/>
</dbReference>
<dbReference type="EMBL" id="AF081810">
    <property type="protein sequence ID" value="AAC70247.1"/>
    <property type="molecule type" value="Genomic_DNA"/>
</dbReference>
<dbReference type="PIR" id="T30409">
    <property type="entry name" value="T30409"/>
</dbReference>
<dbReference type="RefSeq" id="NP_047698.1">
    <property type="nucleotide sequence ID" value="NC_001973.1"/>
</dbReference>
<dbReference type="SMR" id="Q90178"/>
<dbReference type="KEGG" id="vg:1488606"/>
<dbReference type="OrthoDB" id="27883at10239"/>
<dbReference type="Proteomes" id="UP000203997">
    <property type="component" value="Genome"/>
</dbReference>
<dbReference type="Gene3D" id="1.10.1740.70">
    <property type="entry name" value="ChaB"/>
    <property type="match status" value="1"/>
</dbReference>
<dbReference type="InterPro" id="IPR009317">
    <property type="entry name" value="ChaB"/>
</dbReference>
<dbReference type="InterPro" id="IPR037205">
    <property type="entry name" value="ChaB_sf"/>
</dbReference>
<dbReference type="Pfam" id="PF06150">
    <property type="entry name" value="ChaB"/>
    <property type="match status" value="1"/>
</dbReference>
<dbReference type="SUPFAM" id="SSF140376">
    <property type="entry name" value="ChaB-like"/>
    <property type="match status" value="1"/>
</dbReference>
<gene>
    <name type="ordered locus">LdOrf-62</name>
</gene>
<feature type="chain" id="PRO_0000133001" description="Uncharacterized 10.9 kDa protein in LEF8-FP intergenic region">
    <location>
        <begin position="1"/>
        <end position="95"/>
    </location>
</feature>
<feature type="region of interest" description="Disordered" evidence="1">
    <location>
        <begin position="65"/>
        <end position="95"/>
    </location>
</feature>
<protein>
    <recommendedName>
        <fullName>Uncharacterized 10.9 kDa protein in LEF8-FP intergenic region</fullName>
    </recommendedName>
    <alternativeName>
        <fullName>ORF60</fullName>
    </alternativeName>
</protein>